<evidence type="ECO:0000255" key="1">
    <source>
        <dbReference type="HAMAP-Rule" id="MF_00505"/>
    </source>
</evidence>
<proteinExistence type="evidence at protein level"/>
<name>HTPG_MYCTU</name>
<comment type="function">
    <text evidence="1">Molecular chaperone. Has ATPase activity.</text>
</comment>
<comment type="subunit">
    <text evidence="1">Homodimer.</text>
</comment>
<comment type="subcellular location">
    <subcellularLocation>
        <location evidence="1">Cytoplasm</location>
    </subcellularLocation>
</comment>
<comment type="similarity">
    <text evidence="1">Belongs to the heat shock protein 90 family.</text>
</comment>
<keyword id="KW-0067">ATP-binding</keyword>
<keyword id="KW-0143">Chaperone</keyword>
<keyword id="KW-0963">Cytoplasm</keyword>
<keyword id="KW-0547">Nucleotide-binding</keyword>
<keyword id="KW-1185">Reference proteome</keyword>
<keyword id="KW-0346">Stress response</keyword>
<organism>
    <name type="scientific">Mycobacterium tuberculosis (strain ATCC 25618 / H37Rv)</name>
    <dbReference type="NCBI Taxonomy" id="83332"/>
    <lineage>
        <taxon>Bacteria</taxon>
        <taxon>Bacillati</taxon>
        <taxon>Actinomycetota</taxon>
        <taxon>Actinomycetes</taxon>
        <taxon>Mycobacteriales</taxon>
        <taxon>Mycobacteriaceae</taxon>
        <taxon>Mycobacterium</taxon>
        <taxon>Mycobacterium tuberculosis complex</taxon>
    </lineage>
</organism>
<feature type="chain" id="PRO_0000062996" description="Chaperone protein HtpG">
    <location>
        <begin position="1"/>
        <end position="647"/>
    </location>
</feature>
<feature type="region of interest" description="A; substrate-binding" evidence="1">
    <location>
        <begin position="1"/>
        <end position="353"/>
    </location>
</feature>
<feature type="region of interest" description="B" evidence="1">
    <location>
        <begin position="354"/>
        <end position="567"/>
    </location>
</feature>
<feature type="region of interest" description="C" evidence="1">
    <location>
        <begin position="568"/>
        <end position="647"/>
    </location>
</feature>
<gene>
    <name evidence="1" type="primary">htpG</name>
    <name type="ordered locus">Rv2299c</name>
    <name type="ORF">MTCY339.11</name>
</gene>
<accession>P9WMJ7</accession>
<accession>L0TC38</accession>
<accession>P64411</accession>
<accession>Q50667</accession>
<protein>
    <recommendedName>
        <fullName evidence="1">Chaperone protein HtpG</fullName>
    </recommendedName>
    <alternativeName>
        <fullName evidence="1">Heat shock protein HtpG</fullName>
    </alternativeName>
    <alternativeName>
        <fullName evidence="1">High temperature protein G</fullName>
    </alternativeName>
</protein>
<dbReference type="EMBL" id="AL123456">
    <property type="protein sequence ID" value="CCP45081.1"/>
    <property type="molecule type" value="Genomic_DNA"/>
</dbReference>
<dbReference type="PIR" id="G70733">
    <property type="entry name" value="G70733"/>
</dbReference>
<dbReference type="RefSeq" id="NP_216815.1">
    <property type="nucleotide sequence ID" value="NC_000962.3"/>
</dbReference>
<dbReference type="RefSeq" id="WP_003411855.1">
    <property type="nucleotide sequence ID" value="NZ_NVQJ01000012.1"/>
</dbReference>
<dbReference type="SMR" id="P9WMJ7"/>
<dbReference type="FunCoup" id="P9WMJ7">
    <property type="interactions" value="314"/>
</dbReference>
<dbReference type="STRING" id="83332.Rv2299c"/>
<dbReference type="PaxDb" id="83332-Rv2299c"/>
<dbReference type="DNASU" id="887501"/>
<dbReference type="GeneID" id="45426279"/>
<dbReference type="GeneID" id="887501"/>
<dbReference type="KEGG" id="mtu:Rv2299c"/>
<dbReference type="KEGG" id="mtv:RVBD_2299c"/>
<dbReference type="TubercuList" id="Rv2299c"/>
<dbReference type="eggNOG" id="COG0326">
    <property type="taxonomic scope" value="Bacteria"/>
</dbReference>
<dbReference type="InParanoid" id="P9WMJ7"/>
<dbReference type="OrthoDB" id="9802640at2"/>
<dbReference type="PhylomeDB" id="P9WMJ7"/>
<dbReference type="Proteomes" id="UP000001584">
    <property type="component" value="Chromosome"/>
</dbReference>
<dbReference type="GO" id="GO:0005829">
    <property type="term" value="C:cytosol"/>
    <property type="evidence" value="ECO:0000318"/>
    <property type="project" value="GO_Central"/>
</dbReference>
<dbReference type="GO" id="GO:0005576">
    <property type="term" value="C:extracellular region"/>
    <property type="evidence" value="ECO:0007005"/>
    <property type="project" value="MTBBASE"/>
</dbReference>
<dbReference type="GO" id="GO:0009274">
    <property type="term" value="C:peptidoglycan-based cell wall"/>
    <property type="evidence" value="ECO:0007005"/>
    <property type="project" value="MTBBASE"/>
</dbReference>
<dbReference type="GO" id="GO:0005886">
    <property type="term" value="C:plasma membrane"/>
    <property type="evidence" value="ECO:0007005"/>
    <property type="project" value="MTBBASE"/>
</dbReference>
<dbReference type="GO" id="GO:0005524">
    <property type="term" value="F:ATP binding"/>
    <property type="evidence" value="ECO:0000318"/>
    <property type="project" value="GO_Central"/>
</dbReference>
<dbReference type="GO" id="GO:0016887">
    <property type="term" value="F:ATP hydrolysis activity"/>
    <property type="evidence" value="ECO:0000318"/>
    <property type="project" value="GO_Central"/>
</dbReference>
<dbReference type="GO" id="GO:0140662">
    <property type="term" value="F:ATP-dependent protein folding chaperone"/>
    <property type="evidence" value="ECO:0007669"/>
    <property type="project" value="InterPro"/>
</dbReference>
<dbReference type="GO" id="GO:0051082">
    <property type="term" value="F:unfolded protein binding"/>
    <property type="evidence" value="ECO:0000318"/>
    <property type="project" value="GO_Central"/>
</dbReference>
<dbReference type="GO" id="GO:0071451">
    <property type="term" value="P:cellular response to superoxide"/>
    <property type="evidence" value="ECO:0000270"/>
    <property type="project" value="MTBBASE"/>
</dbReference>
<dbReference type="GO" id="GO:0006974">
    <property type="term" value="P:DNA damage response"/>
    <property type="evidence" value="ECO:0000318"/>
    <property type="project" value="GO_Central"/>
</dbReference>
<dbReference type="GO" id="GO:0006457">
    <property type="term" value="P:protein folding"/>
    <property type="evidence" value="ECO:0000318"/>
    <property type="project" value="GO_Central"/>
</dbReference>
<dbReference type="GO" id="GO:0009408">
    <property type="term" value="P:response to heat"/>
    <property type="evidence" value="ECO:0000318"/>
    <property type="project" value="GO_Central"/>
</dbReference>
<dbReference type="CDD" id="cd16927">
    <property type="entry name" value="HATPase_Hsp90-like"/>
    <property type="match status" value="1"/>
</dbReference>
<dbReference type="FunFam" id="1.20.120.790:FF:000006">
    <property type="entry name" value="Chaperone protein HtpG"/>
    <property type="match status" value="1"/>
</dbReference>
<dbReference type="FunFam" id="3.40.50.11260:FF:000005">
    <property type="entry name" value="Heat shock protein 90"/>
    <property type="match status" value="1"/>
</dbReference>
<dbReference type="FunFam" id="3.30.230.80:FF:000002">
    <property type="entry name" value="Molecular chaperone HtpG"/>
    <property type="match status" value="1"/>
</dbReference>
<dbReference type="FunFam" id="3.30.565.10:FF:000009">
    <property type="entry name" value="Molecular chaperone HtpG"/>
    <property type="match status" value="1"/>
</dbReference>
<dbReference type="Gene3D" id="3.30.230.80">
    <property type="match status" value="1"/>
</dbReference>
<dbReference type="Gene3D" id="3.40.50.11260">
    <property type="match status" value="1"/>
</dbReference>
<dbReference type="Gene3D" id="1.20.120.790">
    <property type="entry name" value="Heat shock protein 90, C-terminal domain"/>
    <property type="match status" value="1"/>
</dbReference>
<dbReference type="Gene3D" id="3.30.565.10">
    <property type="entry name" value="Histidine kinase-like ATPase, C-terminal domain"/>
    <property type="match status" value="1"/>
</dbReference>
<dbReference type="HAMAP" id="MF_00505">
    <property type="entry name" value="HSP90"/>
    <property type="match status" value="1"/>
</dbReference>
<dbReference type="InterPro" id="IPR036890">
    <property type="entry name" value="HATPase_C_sf"/>
</dbReference>
<dbReference type="InterPro" id="IPR019805">
    <property type="entry name" value="Heat_shock_protein_90_CS"/>
</dbReference>
<dbReference type="InterPro" id="IPR037196">
    <property type="entry name" value="HSP90_C"/>
</dbReference>
<dbReference type="InterPro" id="IPR001404">
    <property type="entry name" value="Hsp90_fam"/>
</dbReference>
<dbReference type="InterPro" id="IPR020575">
    <property type="entry name" value="Hsp90_N"/>
</dbReference>
<dbReference type="InterPro" id="IPR020568">
    <property type="entry name" value="Ribosomal_Su5_D2-typ_SF"/>
</dbReference>
<dbReference type="NCBIfam" id="NF003555">
    <property type="entry name" value="PRK05218.1"/>
    <property type="match status" value="1"/>
</dbReference>
<dbReference type="PANTHER" id="PTHR11528">
    <property type="entry name" value="HEAT SHOCK PROTEIN 90 FAMILY MEMBER"/>
    <property type="match status" value="1"/>
</dbReference>
<dbReference type="Pfam" id="PF13589">
    <property type="entry name" value="HATPase_c_3"/>
    <property type="match status" value="1"/>
</dbReference>
<dbReference type="Pfam" id="PF00183">
    <property type="entry name" value="HSP90"/>
    <property type="match status" value="1"/>
</dbReference>
<dbReference type="PIRSF" id="PIRSF002583">
    <property type="entry name" value="Hsp90"/>
    <property type="match status" value="1"/>
</dbReference>
<dbReference type="PRINTS" id="PR00775">
    <property type="entry name" value="HEATSHOCK90"/>
</dbReference>
<dbReference type="SMART" id="SM00387">
    <property type="entry name" value="HATPase_c"/>
    <property type="match status" value="1"/>
</dbReference>
<dbReference type="SUPFAM" id="SSF55874">
    <property type="entry name" value="ATPase domain of HSP90 chaperone/DNA topoisomerase II/histidine kinase"/>
    <property type="match status" value="1"/>
</dbReference>
<dbReference type="SUPFAM" id="SSF110942">
    <property type="entry name" value="HSP90 C-terminal domain"/>
    <property type="match status" value="1"/>
</dbReference>
<dbReference type="SUPFAM" id="SSF54211">
    <property type="entry name" value="Ribosomal protein S5 domain 2-like"/>
    <property type="match status" value="1"/>
</dbReference>
<dbReference type="PROSITE" id="PS00298">
    <property type="entry name" value="HSP90"/>
    <property type="match status" value="1"/>
</dbReference>
<sequence length="647" mass="72961">MNAHVEQLEFQAEARQLLDLMVHSVYSNKDAFLRELISNASDALDKLRIEALRNKDLEVDTSDLHIEIDADKAARTLTVRDNGIGMAREEVVDLIGTLAKSGTAELRAQLREAKNAAASEELIGQFGIGFYSSFMVADKVQLLTRKAGESAATRWESSGEGTYTIESVEDAPQGTSVTLHLKPEDAEDDLHDYTSEWKIRNLVKKYSDFIAWPIRMDVERRTPASQEEGGEGGEETVTIETETLNSMKALWARPKEEVSEQEYKEFYKHVAHAWDDPLEIIAMKAEGTFEYQALLFIPSHAPFDLFDRDAHVGIQLYVKRVFIMGDCDQLMPEYLRFVKGVVDAQDMSLNVSREILQQDRQIKAIRRRLTKKVLSTIKDVQSSRPEDYRTFWTQFGRVLKEGLLSDIDNRETLLGISSFVSTYSEEEPTTLAEYVERMKDGQQQIFYATGETRQQLLKSPHLEAFKAKGYEVLLLTDPVDEVWVGMVPEFDGKPLQSVAKGEVDLSSEEDTSEAEREERQKEFADLLTWLQETLSDHVKEVRLSTRLTESPACLITDAFGMTPALARIYRASGQEVPVGKRILELNPSHPLVTGLRQAHQDRADDAEKSLAETAELLYGTALLAEGGALEDPARFAELLAERLARTL</sequence>
<reference key="1">
    <citation type="journal article" date="1998" name="Nature">
        <title>Deciphering the biology of Mycobacterium tuberculosis from the complete genome sequence.</title>
        <authorList>
            <person name="Cole S.T."/>
            <person name="Brosch R."/>
            <person name="Parkhill J."/>
            <person name="Garnier T."/>
            <person name="Churcher C.M."/>
            <person name="Harris D.E."/>
            <person name="Gordon S.V."/>
            <person name="Eiglmeier K."/>
            <person name="Gas S."/>
            <person name="Barry C.E. III"/>
            <person name="Tekaia F."/>
            <person name="Badcock K."/>
            <person name="Basham D."/>
            <person name="Brown D."/>
            <person name="Chillingworth T."/>
            <person name="Connor R."/>
            <person name="Davies R.M."/>
            <person name="Devlin K."/>
            <person name="Feltwell T."/>
            <person name="Gentles S."/>
            <person name="Hamlin N."/>
            <person name="Holroyd S."/>
            <person name="Hornsby T."/>
            <person name="Jagels K."/>
            <person name="Krogh A."/>
            <person name="McLean J."/>
            <person name="Moule S."/>
            <person name="Murphy L.D."/>
            <person name="Oliver S."/>
            <person name="Osborne J."/>
            <person name="Quail M.A."/>
            <person name="Rajandream M.A."/>
            <person name="Rogers J."/>
            <person name="Rutter S."/>
            <person name="Seeger K."/>
            <person name="Skelton S."/>
            <person name="Squares S."/>
            <person name="Squares R."/>
            <person name="Sulston J.E."/>
            <person name="Taylor K."/>
            <person name="Whitehead S."/>
            <person name="Barrell B.G."/>
        </authorList>
    </citation>
    <scope>NUCLEOTIDE SEQUENCE [LARGE SCALE GENOMIC DNA]</scope>
    <source>
        <strain>ATCC 25618 / H37Rv</strain>
    </source>
</reference>
<reference key="2">
    <citation type="journal article" date="2011" name="Mol. Cell. Proteomics">
        <title>Proteogenomic analysis of Mycobacterium tuberculosis by high resolution mass spectrometry.</title>
        <authorList>
            <person name="Kelkar D.S."/>
            <person name="Kumar D."/>
            <person name="Kumar P."/>
            <person name="Balakrishnan L."/>
            <person name="Muthusamy B."/>
            <person name="Yadav A.K."/>
            <person name="Shrivastava P."/>
            <person name="Marimuthu A."/>
            <person name="Anand S."/>
            <person name="Sundaram H."/>
            <person name="Kingsbury R."/>
            <person name="Harsha H.C."/>
            <person name="Nair B."/>
            <person name="Prasad T.S."/>
            <person name="Chauhan D.S."/>
            <person name="Katoch K."/>
            <person name="Katoch V.M."/>
            <person name="Kumar P."/>
            <person name="Chaerkady R."/>
            <person name="Ramachandran S."/>
            <person name="Dash D."/>
            <person name="Pandey A."/>
        </authorList>
    </citation>
    <scope>IDENTIFICATION BY MASS SPECTROMETRY [LARGE SCALE ANALYSIS]</scope>
    <source>
        <strain>ATCC 25618 / H37Rv</strain>
    </source>
</reference>